<evidence type="ECO:0000255" key="1">
    <source>
        <dbReference type="HAMAP-Rule" id="MF_00005"/>
    </source>
</evidence>
<protein>
    <recommendedName>
        <fullName evidence="1">Argininosuccinate synthase</fullName>
        <ecNumber evidence="1">6.3.4.5</ecNumber>
    </recommendedName>
    <alternativeName>
        <fullName evidence="1">Citrulline--aspartate ligase</fullName>
    </alternativeName>
</protein>
<comment type="catalytic activity">
    <reaction evidence="1">
        <text>L-citrulline + L-aspartate + ATP = 2-(N(omega)-L-arginino)succinate + AMP + diphosphate + H(+)</text>
        <dbReference type="Rhea" id="RHEA:10932"/>
        <dbReference type="ChEBI" id="CHEBI:15378"/>
        <dbReference type="ChEBI" id="CHEBI:29991"/>
        <dbReference type="ChEBI" id="CHEBI:30616"/>
        <dbReference type="ChEBI" id="CHEBI:33019"/>
        <dbReference type="ChEBI" id="CHEBI:57472"/>
        <dbReference type="ChEBI" id="CHEBI:57743"/>
        <dbReference type="ChEBI" id="CHEBI:456215"/>
        <dbReference type="EC" id="6.3.4.5"/>
    </reaction>
</comment>
<comment type="pathway">
    <text evidence="1">Amino-acid biosynthesis; L-arginine biosynthesis; L-arginine from L-ornithine and carbamoyl phosphate: step 2/3.</text>
</comment>
<comment type="subunit">
    <text evidence="1">Homotetramer.</text>
</comment>
<comment type="subcellular location">
    <subcellularLocation>
        <location evidence="1">Cytoplasm</location>
    </subcellularLocation>
</comment>
<comment type="similarity">
    <text evidence="1">Belongs to the argininosuccinate synthase family. Type 1 subfamily.</text>
</comment>
<accession>B1VH30</accession>
<dbReference type="EC" id="6.3.4.5" evidence="1"/>
<dbReference type="EMBL" id="AM942444">
    <property type="protein sequence ID" value="CAQ05071.1"/>
    <property type="molecule type" value="Genomic_DNA"/>
</dbReference>
<dbReference type="RefSeq" id="WP_012360359.1">
    <property type="nucleotide sequence ID" value="NC_010545.1"/>
</dbReference>
<dbReference type="SMR" id="B1VH30"/>
<dbReference type="STRING" id="504474.cu1111"/>
<dbReference type="KEGG" id="cur:cu1111"/>
<dbReference type="eggNOG" id="COG0137">
    <property type="taxonomic scope" value="Bacteria"/>
</dbReference>
<dbReference type="HOGENOM" id="CLU_032784_4_2_11"/>
<dbReference type="UniPathway" id="UPA00068">
    <property type="reaction ID" value="UER00113"/>
</dbReference>
<dbReference type="Proteomes" id="UP000001727">
    <property type="component" value="Chromosome"/>
</dbReference>
<dbReference type="GO" id="GO:0005737">
    <property type="term" value="C:cytoplasm"/>
    <property type="evidence" value="ECO:0007669"/>
    <property type="project" value="UniProtKB-SubCell"/>
</dbReference>
<dbReference type="GO" id="GO:0004055">
    <property type="term" value="F:argininosuccinate synthase activity"/>
    <property type="evidence" value="ECO:0007669"/>
    <property type="project" value="UniProtKB-UniRule"/>
</dbReference>
<dbReference type="GO" id="GO:0005524">
    <property type="term" value="F:ATP binding"/>
    <property type="evidence" value="ECO:0007669"/>
    <property type="project" value="UniProtKB-UniRule"/>
</dbReference>
<dbReference type="GO" id="GO:0000053">
    <property type="term" value="P:argininosuccinate metabolic process"/>
    <property type="evidence" value="ECO:0007669"/>
    <property type="project" value="TreeGrafter"/>
</dbReference>
<dbReference type="GO" id="GO:0006526">
    <property type="term" value="P:L-arginine biosynthetic process"/>
    <property type="evidence" value="ECO:0007669"/>
    <property type="project" value="UniProtKB-UniRule"/>
</dbReference>
<dbReference type="GO" id="GO:0000050">
    <property type="term" value="P:urea cycle"/>
    <property type="evidence" value="ECO:0007669"/>
    <property type="project" value="TreeGrafter"/>
</dbReference>
<dbReference type="CDD" id="cd01999">
    <property type="entry name" value="ASS"/>
    <property type="match status" value="1"/>
</dbReference>
<dbReference type="FunFam" id="3.40.50.620:FF:000038">
    <property type="entry name" value="Argininosuccinate synthase"/>
    <property type="match status" value="1"/>
</dbReference>
<dbReference type="FunFam" id="3.90.1260.10:FF:000007">
    <property type="entry name" value="Argininosuccinate synthase"/>
    <property type="match status" value="1"/>
</dbReference>
<dbReference type="Gene3D" id="3.90.1260.10">
    <property type="entry name" value="Argininosuccinate synthetase, chain A, domain 2"/>
    <property type="match status" value="1"/>
</dbReference>
<dbReference type="Gene3D" id="3.40.50.620">
    <property type="entry name" value="HUPs"/>
    <property type="match status" value="1"/>
</dbReference>
<dbReference type="Gene3D" id="1.20.5.470">
    <property type="entry name" value="Single helix bin"/>
    <property type="match status" value="1"/>
</dbReference>
<dbReference type="HAMAP" id="MF_00005">
    <property type="entry name" value="Arg_succ_synth_type1"/>
    <property type="match status" value="1"/>
</dbReference>
<dbReference type="InterPro" id="IPR048268">
    <property type="entry name" value="Arginosuc_syn_C"/>
</dbReference>
<dbReference type="InterPro" id="IPR048267">
    <property type="entry name" value="Arginosuc_syn_N"/>
</dbReference>
<dbReference type="InterPro" id="IPR001518">
    <property type="entry name" value="Arginosuc_synth"/>
</dbReference>
<dbReference type="InterPro" id="IPR018223">
    <property type="entry name" value="Arginosuc_synth_CS"/>
</dbReference>
<dbReference type="InterPro" id="IPR023434">
    <property type="entry name" value="Arginosuc_synth_type_1_subfam"/>
</dbReference>
<dbReference type="InterPro" id="IPR024074">
    <property type="entry name" value="AS_cat/multimer_dom_body"/>
</dbReference>
<dbReference type="InterPro" id="IPR014729">
    <property type="entry name" value="Rossmann-like_a/b/a_fold"/>
</dbReference>
<dbReference type="NCBIfam" id="TIGR00032">
    <property type="entry name" value="argG"/>
    <property type="match status" value="1"/>
</dbReference>
<dbReference type="NCBIfam" id="NF001770">
    <property type="entry name" value="PRK00509.1"/>
    <property type="match status" value="1"/>
</dbReference>
<dbReference type="PANTHER" id="PTHR11587">
    <property type="entry name" value="ARGININOSUCCINATE SYNTHASE"/>
    <property type="match status" value="1"/>
</dbReference>
<dbReference type="PANTHER" id="PTHR11587:SF2">
    <property type="entry name" value="ARGININOSUCCINATE SYNTHASE"/>
    <property type="match status" value="1"/>
</dbReference>
<dbReference type="Pfam" id="PF20979">
    <property type="entry name" value="Arginosuc_syn_C"/>
    <property type="match status" value="1"/>
</dbReference>
<dbReference type="Pfam" id="PF00764">
    <property type="entry name" value="Arginosuc_synth"/>
    <property type="match status" value="1"/>
</dbReference>
<dbReference type="SUPFAM" id="SSF52402">
    <property type="entry name" value="Adenine nucleotide alpha hydrolases-like"/>
    <property type="match status" value="1"/>
</dbReference>
<dbReference type="SUPFAM" id="SSF69864">
    <property type="entry name" value="Argininosuccinate synthetase, C-terminal domain"/>
    <property type="match status" value="1"/>
</dbReference>
<dbReference type="PROSITE" id="PS00564">
    <property type="entry name" value="ARGININOSUCCIN_SYN_1"/>
    <property type="match status" value="1"/>
</dbReference>
<dbReference type="PROSITE" id="PS00565">
    <property type="entry name" value="ARGININOSUCCIN_SYN_2"/>
    <property type="match status" value="1"/>
</dbReference>
<organism>
    <name type="scientific">Corynebacterium urealyticum (strain ATCC 43042 / DSM 7109)</name>
    <dbReference type="NCBI Taxonomy" id="504474"/>
    <lineage>
        <taxon>Bacteria</taxon>
        <taxon>Bacillati</taxon>
        <taxon>Actinomycetota</taxon>
        <taxon>Actinomycetes</taxon>
        <taxon>Mycobacteriales</taxon>
        <taxon>Corynebacteriaceae</taxon>
        <taxon>Corynebacterium</taxon>
    </lineage>
</organism>
<proteinExistence type="inferred from homology"/>
<name>ASSY_CORU7</name>
<feature type="chain" id="PRO_1000089033" description="Argininosuccinate synthase">
    <location>
        <begin position="1"/>
        <end position="399"/>
    </location>
</feature>
<feature type="binding site" evidence="1">
    <location>
        <begin position="8"/>
        <end position="16"/>
    </location>
    <ligand>
        <name>ATP</name>
        <dbReference type="ChEBI" id="CHEBI:30616"/>
    </ligand>
</feature>
<feature type="binding site" evidence="1">
    <location>
        <position position="87"/>
    </location>
    <ligand>
        <name>L-citrulline</name>
        <dbReference type="ChEBI" id="CHEBI:57743"/>
    </ligand>
</feature>
<feature type="binding site" evidence="1">
    <location>
        <position position="117"/>
    </location>
    <ligand>
        <name>ATP</name>
        <dbReference type="ChEBI" id="CHEBI:30616"/>
    </ligand>
</feature>
<feature type="binding site" evidence="1">
    <location>
        <position position="119"/>
    </location>
    <ligand>
        <name>L-aspartate</name>
        <dbReference type="ChEBI" id="CHEBI:29991"/>
    </ligand>
</feature>
<feature type="binding site" evidence="1">
    <location>
        <position position="123"/>
    </location>
    <ligand>
        <name>L-aspartate</name>
        <dbReference type="ChEBI" id="CHEBI:29991"/>
    </ligand>
</feature>
<feature type="binding site" evidence="1">
    <location>
        <position position="123"/>
    </location>
    <ligand>
        <name>L-citrulline</name>
        <dbReference type="ChEBI" id="CHEBI:57743"/>
    </ligand>
</feature>
<feature type="binding site" evidence="1">
    <location>
        <position position="124"/>
    </location>
    <ligand>
        <name>L-aspartate</name>
        <dbReference type="ChEBI" id="CHEBI:29991"/>
    </ligand>
</feature>
<feature type="binding site" evidence="1">
    <location>
        <position position="127"/>
    </location>
    <ligand>
        <name>L-citrulline</name>
        <dbReference type="ChEBI" id="CHEBI:57743"/>
    </ligand>
</feature>
<feature type="binding site" evidence="1">
    <location>
        <position position="175"/>
    </location>
    <ligand>
        <name>L-citrulline</name>
        <dbReference type="ChEBI" id="CHEBI:57743"/>
    </ligand>
</feature>
<feature type="binding site" evidence="1">
    <location>
        <position position="259"/>
    </location>
    <ligand>
        <name>L-citrulline</name>
        <dbReference type="ChEBI" id="CHEBI:57743"/>
    </ligand>
</feature>
<feature type="binding site" evidence="1">
    <location>
        <position position="271"/>
    </location>
    <ligand>
        <name>L-citrulline</name>
        <dbReference type="ChEBI" id="CHEBI:57743"/>
    </ligand>
</feature>
<reference key="1">
    <citation type="journal article" date="2008" name="J. Biotechnol.">
        <title>The lifestyle of Corynebacterium urealyticum derived from its complete genome sequence established by pyrosequencing.</title>
        <authorList>
            <person name="Tauch A."/>
            <person name="Trost E."/>
            <person name="Tilker A."/>
            <person name="Ludewig U."/>
            <person name="Schneiker S."/>
            <person name="Goesmann A."/>
            <person name="Arnold W."/>
            <person name="Bekel T."/>
            <person name="Brinkrolf K."/>
            <person name="Brune I."/>
            <person name="Goetker S."/>
            <person name="Kalinowski J."/>
            <person name="Kamp P.-B."/>
            <person name="Lobo F.P."/>
            <person name="Viehoever P."/>
            <person name="Weisshaar B."/>
            <person name="Soriano F."/>
            <person name="Droege M."/>
            <person name="Puehler A."/>
        </authorList>
    </citation>
    <scope>NUCLEOTIDE SEQUENCE [LARGE SCALE GENOMIC DNA]</scope>
    <source>
        <strain>ATCC 43042 / DSM 7109</strain>
    </source>
</reference>
<gene>
    <name evidence="1" type="primary">argG</name>
    <name type="ordered locus">cu1111</name>
</gene>
<keyword id="KW-0028">Amino-acid biosynthesis</keyword>
<keyword id="KW-0055">Arginine biosynthesis</keyword>
<keyword id="KW-0067">ATP-binding</keyword>
<keyword id="KW-0963">Cytoplasm</keyword>
<keyword id="KW-0436">Ligase</keyword>
<keyword id="KW-0547">Nucleotide-binding</keyword>
<keyword id="KW-1185">Reference proteome</keyword>
<sequence length="399" mass="43861">MKDRVVLAYSGGLDTTVAISWIAKERNAEVIAVSIDLGQGGEDMETVRQRALGAGAVESIVVDARDEFANDYCLPTIKANGLYMKEYPLVSAISRPLIVKHMAEAAKEHNGTAVAHGCTGKGNDQVRFEVGFANTAPELEIIAPARDYAWTRDKAIAFAEENNIPIEQSKSSPFSIDQNVWGRAVETGYLEDLWNAPTKDVYAYTEDPALGQAPDEVIISFESGVPVAIDGRKVTVLEAIEELNRRAGAQGVGRLDMVEDRLVGIKSREIYEAPGAMTLIRAHEAMEAVTIERELARYKRGIDAEWSDLVYDGLWFSPLKRSLDAFIEESQEHVTGDIRLVLHAGNIIINGRRSDHSLYDFNLATYDEGDSFDQSLAKGFVELHGLSSKIAAKRDMGIL</sequence>